<organism>
    <name type="scientific">Bifidobacterium animalis subsp. lactis (strain AD011)</name>
    <dbReference type="NCBI Taxonomy" id="442563"/>
    <lineage>
        <taxon>Bacteria</taxon>
        <taxon>Bacillati</taxon>
        <taxon>Actinomycetota</taxon>
        <taxon>Actinomycetes</taxon>
        <taxon>Bifidobacteriales</taxon>
        <taxon>Bifidobacteriaceae</taxon>
        <taxon>Bifidobacterium</taxon>
    </lineage>
</organism>
<name>MRAY_BIFA0</name>
<keyword id="KW-0131">Cell cycle</keyword>
<keyword id="KW-0132">Cell division</keyword>
<keyword id="KW-1003">Cell membrane</keyword>
<keyword id="KW-0133">Cell shape</keyword>
<keyword id="KW-0961">Cell wall biogenesis/degradation</keyword>
<keyword id="KW-0460">Magnesium</keyword>
<keyword id="KW-0472">Membrane</keyword>
<keyword id="KW-0479">Metal-binding</keyword>
<keyword id="KW-0573">Peptidoglycan synthesis</keyword>
<keyword id="KW-1185">Reference proteome</keyword>
<keyword id="KW-0808">Transferase</keyword>
<keyword id="KW-0812">Transmembrane</keyword>
<keyword id="KW-1133">Transmembrane helix</keyword>
<sequence length="368" mass="40042">MIALIIGILTSLIITLVGTPLLIRIVHKLNYGQYIRQDGPKSHQVKRGTPTLGGVVIVLAVVLGWCASALYRFCTTGARPTWAAILALFAMVSMGVLGFIDDFAKVRKKQNEGLTVGGKFFGQVVFATIFAVLALIVPTRSGFPVAQAGMSFIEKPFLSFEFAGRIVAIILFVIWVNFLMAAWTNAVNLSDGLDGLCAGSSMIAFVGYAIIAMWQMYHLKGQAHSGFTYAVSDPLDLGIIACCAAVACLGFLWYNCNPASIFMGDTGSLALGGLFAALSIITHTEFLAMIIGGLFVVETLSDVIQVGYFKATHKRVFKMAPIHHHFELCGWSESKVVVRFWIVELMFVITGLIIFYGNWVGLSGLWHH</sequence>
<gene>
    <name evidence="1" type="primary">mraY</name>
    <name type="ordered locus">BLA_0779</name>
</gene>
<protein>
    <recommendedName>
        <fullName evidence="1">Phospho-N-acetylmuramoyl-pentapeptide-transferase</fullName>
        <ecNumber evidence="1">2.7.8.13</ecNumber>
    </recommendedName>
    <alternativeName>
        <fullName evidence="1">UDP-MurNAc-pentapeptide phosphotransferase</fullName>
    </alternativeName>
</protein>
<proteinExistence type="inferred from homology"/>
<evidence type="ECO:0000255" key="1">
    <source>
        <dbReference type="HAMAP-Rule" id="MF_00038"/>
    </source>
</evidence>
<reference key="1">
    <citation type="journal article" date="2009" name="J. Bacteriol.">
        <title>Genome sequence of the probiotic bacterium Bifidobacterium animalis subsp. lactis AD011.</title>
        <authorList>
            <person name="Kim J.F."/>
            <person name="Jeong H."/>
            <person name="Yu D.S."/>
            <person name="Choi S.-H."/>
            <person name="Hur C.-G."/>
            <person name="Park M.-S."/>
            <person name="Yoon S.H."/>
            <person name="Kim D.-W."/>
            <person name="Ji G.E."/>
            <person name="Park H.-S."/>
            <person name="Oh T.K."/>
        </authorList>
    </citation>
    <scope>NUCLEOTIDE SEQUENCE [LARGE SCALE GENOMIC DNA]</scope>
    <source>
        <strain>AD011</strain>
    </source>
</reference>
<accession>B8DSU2</accession>
<dbReference type="EC" id="2.7.8.13" evidence="1"/>
<dbReference type="EMBL" id="CP001213">
    <property type="protein sequence ID" value="ACL29071.1"/>
    <property type="molecule type" value="Genomic_DNA"/>
</dbReference>
<dbReference type="RefSeq" id="WP_004218646.1">
    <property type="nucleotide sequence ID" value="NC_011835.1"/>
</dbReference>
<dbReference type="SMR" id="B8DSU2"/>
<dbReference type="STRING" id="442563.BLA_0779"/>
<dbReference type="GeneID" id="29695874"/>
<dbReference type="KEGG" id="bla:BLA_0779"/>
<dbReference type="HOGENOM" id="CLU_023982_0_1_11"/>
<dbReference type="UniPathway" id="UPA00219"/>
<dbReference type="Proteomes" id="UP000002456">
    <property type="component" value="Chromosome"/>
</dbReference>
<dbReference type="GO" id="GO:0005886">
    <property type="term" value="C:plasma membrane"/>
    <property type="evidence" value="ECO:0007669"/>
    <property type="project" value="UniProtKB-SubCell"/>
</dbReference>
<dbReference type="GO" id="GO:0046872">
    <property type="term" value="F:metal ion binding"/>
    <property type="evidence" value="ECO:0007669"/>
    <property type="project" value="UniProtKB-KW"/>
</dbReference>
<dbReference type="GO" id="GO:0008963">
    <property type="term" value="F:phospho-N-acetylmuramoyl-pentapeptide-transferase activity"/>
    <property type="evidence" value="ECO:0007669"/>
    <property type="project" value="UniProtKB-UniRule"/>
</dbReference>
<dbReference type="GO" id="GO:0051992">
    <property type="term" value="F:UDP-N-acetylmuramoyl-L-alanyl-D-glutamyl-meso-2,6-diaminopimelyl-D-alanyl-D-alanine:undecaprenyl-phosphate transferase activity"/>
    <property type="evidence" value="ECO:0007669"/>
    <property type="project" value="RHEA"/>
</dbReference>
<dbReference type="GO" id="GO:0051301">
    <property type="term" value="P:cell division"/>
    <property type="evidence" value="ECO:0007669"/>
    <property type="project" value="UniProtKB-KW"/>
</dbReference>
<dbReference type="GO" id="GO:0071555">
    <property type="term" value="P:cell wall organization"/>
    <property type="evidence" value="ECO:0007669"/>
    <property type="project" value="UniProtKB-KW"/>
</dbReference>
<dbReference type="GO" id="GO:0009252">
    <property type="term" value="P:peptidoglycan biosynthetic process"/>
    <property type="evidence" value="ECO:0007669"/>
    <property type="project" value="UniProtKB-UniRule"/>
</dbReference>
<dbReference type="GO" id="GO:0008360">
    <property type="term" value="P:regulation of cell shape"/>
    <property type="evidence" value="ECO:0007669"/>
    <property type="project" value="UniProtKB-KW"/>
</dbReference>
<dbReference type="CDD" id="cd06852">
    <property type="entry name" value="GT_MraY"/>
    <property type="match status" value="1"/>
</dbReference>
<dbReference type="HAMAP" id="MF_00038">
    <property type="entry name" value="MraY"/>
    <property type="match status" value="1"/>
</dbReference>
<dbReference type="InterPro" id="IPR000715">
    <property type="entry name" value="Glycosyl_transferase_4"/>
</dbReference>
<dbReference type="InterPro" id="IPR003524">
    <property type="entry name" value="PNAcMuramoyl-5peptid_Trfase"/>
</dbReference>
<dbReference type="InterPro" id="IPR018480">
    <property type="entry name" value="PNAcMuramoyl-5peptid_Trfase_CS"/>
</dbReference>
<dbReference type="NCBIfam" id="TIGR00445">
    <property type="entry name" value="mraY"/>
    <property type="match status" value="1"/>
</dbReference>
<dbReference type="PANTHER" id="PTHR22926">
    <property type="entry name" value="PHOSPHO-N-ACETYLMURAMOYL-PENTAPEPTIDE-TRANSFERASE"/>
    <property type="match status" value="1"/>
</dbReference>
<dbReference type="PANTHER" id="PTHR22926:SF5">
    <property type="entry name" value="PHOSPHO-N-ACETYLMURAMOYL-PENTAPEPTIDE-TRANSFERASE HOMOLOG"/>
    <property type="match status" value="1"/>
</dbReference>
<dbReference type="Pfam" id="PF00953">
    <property type="entry name" value="Glycos_transf_4"/>
    <property type="match status" value="1"/>
</dbReference>
<dbReference type="PROSITE" id="PS01348">
    <property type="entry name" value="MRAY_2"/>
    <property type="match status" value="1"/>
</dbReference>
<comment type="function">
    <text evidence="1">Catalyzes the initial step of the lipid cycle reactions in the biosynthesis of the cell wall peptidoglycan: transfers peptidoglycan precursor phospho-MurNAc-pentapeptide from UDP-MurNAc-pentapeptide onto the lipid carrier undecaprenyl phosphate, yielding undecaprenyl-pyrophosphoryl-MurNAc-pentapeptide, known as lipid I.</text>
</comment>
<comment type="catalytic activity">
    <reaction evidence="1">
        <text>UDP-N-acetyl-alpha-D-muramoyl-L-alanyl-gamma-D-glutamyl-meso-2,6-diaminopimeloyl-D-alanyl-D-alanine + di-trans,octa-cis-undecaprenyl phosphate = di-trans,octa-cis-undecaprenyl diphospho-N-acetyl-alpha-D-muramoyl-L-alanyl-D-glutamyl-meso-2,6-diaminopimeloyl-D-alanyl-D-alanine + UMP</text>
        <dbReference type="Rhea" id="RHEA:28386"/>
        <dbReference type="ChEBI" id="CHEBI:57865"/>
        <dbReference type="ChEBI" id="CHEBI:60392"/>
        <dbReference type="ChEBI" id="CHEBI:61386"/>
        <dbReference type="ChEBI" id="CHEBI:61387"/>
        <dbReference type="EC" id="2.7.8.13"/>
    </reaction>
</comment>
<comment type="cofactor">
    <cofactor evidence="1">
        <name>Mg(2+)</name>
        <dbReference type="ChEBI" id="CHEBI:18420"/>
    </cofactor>
</comment>
<comment type="pathway">
    <text evidence="1">Cell wall biogenesis; peptidoglycan biosynthesis.</text>
</comment>
<comment type="subcellular location">
    <subcellularLocation>
        <location evidence="1">Cell membrane</location>
        <topology evidence="1">Multi-pass membrane protein</topology>
    </subcellularLocation>
</comment>
<comment type="similarity">
    <text evidence="1">Belongs to the glycosyltransferase 4 family. MraY subfamily.</text>
</comment>
<feature type="chain" id="PRO_1000117164" description="Phospho-N-acetylmuramoyl-pentapeptide-transferase">
    <location>
        <begin position="1"/>
        <end position="368"/>
    </location>
</feature>
<feature type="transmembrane region" description="Helical" evidence="1">
    <location>
        <begin position="2"/>
        <end position="22"/>
    </location>
</feature>
<feature type="transmembrane region" description="Helical" evidence="1">
    <location>
        <begin position="51"/>
        <end position="71"/>
    </location>
</feature>
<feature type="transmembrane region" description="Helical" evidence="1">
    <location>
        <begin position="80"/>
        <end position="100"/>
    </location>
</feature>
<feature type="transmembrane region" description="Helical" evidence="1">
    <location>
        <begin position="116"/>
        <end position="136"/>
    </location>
</feature>
<feature type="transmembrane region" description="Helical" evidence="1">
    <location>
        <begin position="166"/>
        <end position="186"/>
    </location>
</feature>
<feature type="transmembrane region" description="Helical" evidence="1">
    <location>
        <begin position="193"/>
        <end position="213"/>
    </location>
</feature>
<feature type="transmembrane region" description="Helical" evidence="1">
    <location>
        <begin position="234"/>
        <end position="254"/>
    </location>
</feature>
<feature type="transmembrane region" description="Helical" evidence="1">
    <location>
        <begin position="256"/>
        <end position="276"/>
    </location>
</feature>
<feature type="transmembrane region" description="Helical" evidence="1">
    <location>
        <begin position="277"/>
        <end position="297"/>
    </location>
</feature>
<feature type="transmembrane region" description="Helical" evidence="1">
    <location>
        <begin position="340"/>
        <end position="360"/>
    </location>
</feature>